<sequence length="802" mass="92589">MKKKNIKNSMNNHTPMIKQYLSLKSQYPDMLLFYQMGDFYELFYEDAERISELLKITLTKKGYSNHKIIPMAGVPCHKSEYYLSKLVKLGESIAICDQQKETDCKKKLISRKVVRIITPGTVTDEVLLEENEDNFIAAIWKENNQFGYSVLDLSLGFFGVSKIFSSCDLLSEIERTNPKEILYPENFSDVFLIESRKCIRKRSLLEFDLETSYKLLNLQFNTCSLDGFGIEKNNFVIRAAGCLLQYVKSMNMTVLPNIRQLKYNYMEDSIFMNFSTRKSLEITQNISGEKKNTLSAILNKTVTSMGSRMLNRWLNSPLKNFKIVRNRHESVEALQFFYKELQFILRQVNDLERIYSRLALRTASPHDFVRMRSTLEILPNLHLILKKIKSKHIKKIRLSIGYFEEVLCLLKKAISLKPSKCIRDGGVIAELYNIELDELRSIKINSKEYIKNFEQKEKKKLMIESFKIKFNKIIGYYIQISKRHTHLIPKYYVIIQTLKNTERYSVPLLKEYEEKVLNSEMRSLLLEKKLYAEIFNIIEPFLEKLQNSALALSELDVLVNLSERAISLNYTRPIMSEKYGISLLESRHPVVECFLKTPFIKNSVFLSRTQRMIIITGPNMGGKSTYMRQIALIVIMAGIGSFVPARYALIGSIDKIFTRIGSADDLSNGYSTFMMEMMEISNILHNATSNSLVLIDELGRGTSTNEGLSLAWSCSRYLININKSMTLLSTHFVELTKLEEKEKFVKNFHFSAIKSDLHIAFLYKIKNGISKKSYGISVASLSGLPDSVLEDAEKKLIEIENT</sequence>
<protein>
    <recommendedName>
        <fullName evidence="1">DNA mismatch repair protein MutS</fullName>
    </recommendedName>
</protein>
<dbReference type="EMBL" id="CP001158">
    <property type="protein sequence ID" value="ACL30224.1"/>
    <property type="molecule type" value="Genomic_DNA"/>
</dbReference>
<dbReference type="RefSeq" id="WP_012619545.1">
    <property type="nucleotide sequence ID" value="NC_011834.1"/>
</dbReference>
<dbReference type="SMR" id="B8D7V9"/>
<dbReference type="KEGG" id="bau:BUAPTUC7_423"/>
<dbReference type="HOGENOM" id="CLU_002472_4_0_6"/>
<dbReference type="GO" id="GO:0005829">
    <property type="term" value="C:cytosol"/>
    <property type="evidence" value="ECO:0007669"/>
    <property type="project" value="TreeGrafter"/>
</dbReference>
<dbReference type="GO" id="GO:0005524">
    <property type="term" value="F:ATP binding"/>
    <property type="evidence" value="ECO:0007669"/>
    <property type="project" value="UniProtKB-UniRule"/>
</dbReference>
<dbReference type="GO" id="GO:0140664">
    <property type="term" value="F:ATP-dependent DNA damage sensor activity"/>
    <property type="evidence" value="ECO:0007669"/>
    <property type="project" value="InterPro"/>
</dbReference>
<dbReference type="GO" id="GO:0003684">
    <property type="term" value="F:damaged DNA binding"/>
    <property type="evidence" value="ECO:0007669"/>
    <property type="project" value="UniProtKB-UniRule"/>
</dbReference>
<dbReference type="GO" id="GO:0030983">
    <property type="term" value="F:mismatched DNA binding"/>
    <property type="evidence" value="ECO:0007669"/>
    <property type="project" value="InterPro"/>
</dbReference>
<dbReference type="GO" id="GO:0006298">
    <property type="term" value="P:mismatch repair"/>
    <property type="evidence" value="ECO:0007669"/>
    <property type="project" value="UniProtKB-UniRule"/>
</dbReference>
<dbReference type="FunFam" id="1.10.1420.10:FF:000001">
    <property type="entry name" value="DNA mismatch repair protein MutS"/>
    <property type="match status" value="1"/>
</dbReference>
<dbReference type="FunFam" id="3.40.1170.10:FF:000001">
    <property type="entry name" value="DNA mismatch repair protein MutS"/>
    <property type="match status" value="1"/>
</dbReference>
<dbReference type="FunFam" id="3.40.50.300:FF:000870">
    <property type="entry name" value="MutS protein homolog 4"/>
    <property type="match status" value="1"/>
</dbReference>
<dbReference type="Gene3D" id="1.10.1420.10">
    <property type="match status" value="2"/>
</dbReference>
<dbReference type="Gene3D" id="3.40.1170.10">
    <property type="entry name" value="DNA repair protein MutS, domain I"/>
    <property type="match status" value="1"/>
</dbReference>
<dbReference type="Gene3D" id="3.30.420.110">
    <property type="entry name" value="MutS, connector domain"/>
    <property type="match status" value="1"/>
</dbReference>
<dbReference type="Gene3D" id="3.40.50.300">
    <property type="entry name" value="P-loop containing nucleotide triphosphate hydrolases"/>
    <property type="match status" value="1"/>
</dbReference>
<dbReference type="HAMAP" id="MF_00096">
    <property type="entry name" value="MutS"/>
    <property type="match status" value="1"/>
</dbReference>
<dbReference type="InterPro" id="IPR005748">
    <property type="entry name" value="DNA_mismatch_repair_MutS"/>
</dbReference>
<dbReference type="InterPro" id="IPR007695">
    <property type="entry name" value="DNA_mismatch_repair_MutS-lik_N"/>
</dbReference>
<dbReference type="InterPro" id="IPR017261">
    <property type="entry name" value="DNA_mismatch_repair_MutS/MSH"/>
</dbReference>
<dbReference type="InterPro" id="IPR000432">
    <property type="entry name" value="DNA_mismatch_repair_MutS_C"/>
</dbReference>
<dbReference type="InterPro" id="IPR007861">
    <property type="entry name" value="DNA_mismatch_repair_MutS_clamp"/>
</dbReference>
<dbReference type="InterPro" id="IPR007696">
    <property type="entry name" value="DNA_mismatch_repair_MutS_core"/>
</dbReference>
<dbReference type="InterPro" id="IPR016151">
    <property type="entry name" value="DNA_mismatch_repair_MutS_N"/>
</dbReference>
<dbReference type="InterPro" id="IPR036187">
    <property type="entry name" value="DNA_mismatch_repair_MutS_sf"/>
</dbReference>
<dbReference type="InterPro" id="IPR007860">
    <property type="entry name" value="DNA_mmatch_repair_MutS_con_dom"/>
</dbReference>
<dbReference type="InterPro" id="IPR045076">
    <property type="entry name" value="MutS"/>
</dbReference>
<dbReference type="InterPro" id="IPR036678">
    <property type="entry name" value="MutS_con_dom_sf"/>
</dbReference>
<dbReference type="InterPro" id="IPR027417">
    <property type="entry name" value="P-loop_NTPase"/>
</dbReference>
<dbReference type="NCBIfam" id="TIGR01070">
    <property type="entry name" value="mutS1"/>
    <property type="match status" value="1"/>
</dbReference>
<dbReference type="NCBIfam" id="NF003810">
    <property type="entry name" value="PRK05399.1"/>
    <property type="match status" value="1"/>
</dbReference>
<dbReference type="PANTHER" id="PTHR11361:SF34">
    <property type="entry name" value="DNA MISMATCH REPAIR PROTEIN MSH1, MITOCHONDRIAL"/>
    <property type="match status" value="1"/>
</dbReference>
<dbReference type="PANTHER" id="PTHR11361">
    <property type="entry name" value="DNA MISMATCH REPAIR PROTEIN MUTS FAMILY MEMBER"/>
    <property type="match status" value="1"/>
</dbReference>
<dbReference type="Pfam" id="PF01624">
    <property type="entry name" value="MutS_I"/>
    <property type="match status" value="1"/>
</dbReference>
<dbReference type="Pfam" id="PF05188">
    <property type="entry name" value="MutS_II"/>
    <property type="match status" value="1"/>
</dbReference>
<dbReference type="Pfam" id="PF05192">
    <property type="entry name" value="MutS_III"/>
    <property type="match status" value="1"/>
</dbReference>
<dbReference type="Pfam" id="PF05190">
    <property type="entry name" value="MutS_IV"/>
    <property type="match status" value="1"/>
</dbReference>
<dbReference type="Pfam" id="PF00488">
    <property type="entry name" value="MutS_V"/>
    <property type="match status" value="1"/>
</dbReference>
<dbReference type="PIRSF" id="PIRSF037677">
    <property type="entry name" value="DNA_mis_repair_Msh6"/>
    <property type="match status" value="1"/>
</dbReference>
<dbReference type="SMART" id="SM00534">
    <property type="entry name" value="MUTSac"/>
    <property type="match status" value="1"/>
</dbReference>
<dbReference type="SMART" id="SM00533">
    <property type="entry name" value="MUTSd"/>
    <property type="match status" value="1"/>
</dbReference>
<dbReference type="SUPFAM" id="SSF55271">
    <property type="entry name" value="DNA repair protein MutS, domain I"/>
    <property type="match status" value="1"/>
</dbReference>
<dbReference type="SUPFAM" id="SSF53150">
    <property type="entry name" value="DNA repair protein MutS, domain II"/>
    <property type="match status" value="1"/>
</dbReference>
<dbReference type="SUPFAM" id="SSF48334">
    <property type="entry name" value="DNA repair protein MutS, domain III"/>
    <property type="match status" value="1"/>
</dbReference>
<dbReference type="SUPFAM" id="SSF52540">
    <property type="entry name" value="P-loop containing nucleoside triphosphate hydrolases"/>
    <property type="match status" value="1"/>
</dbReference>
<dbReference type="PROSITE" id="PS00486">
    <property type="entry name" value="DNA_MISMATCH_REPAIR_2"/>
    <property type="match status" value="1"/>
</dbReference>
<accession>B8D7V9</accession>
<gene>
    <name evidence="1" type="primary">mutS</name>
    <name type="ordered locus">BUAPTUC7_423</name>
</gene>
<evidence type="ECO:0000255" key="1">
    <source>
        <dbReference type="HAMAP-Rule" id="MF_00096"/>
    </source>
</evidence>
<reference key="1">
    <citation type="journal article" date="2009" name="Science">
        <title>The dynamics and time scale of ongoing genomic erosion in symbiotic bacteria.</title>
        <authorList>
            <person name="Moran N.A."/>
            <person name="McLaughlin H.J."/>
            <person name="Sorek R."/>
        </authorList>
    </citation>
    <scope>NUCLEOTIDE SEQUENCE [LARGE SCALE GENOMIC DNA]</scope>
    <source>
        <strain>Tuc7</strain>
    </source>
</reference>
<feature type="chain" id="PRO_1000192201" description="DNA mismatch repair protein MutS">
    <location>
        <begin position="1"/>
        <end position="802"/>
    </location>
</feature>
<feature type="binding site" evidence="1">
    <location>
        <begin position="617"/>
        <end position="624"/>
    </location>
    <ligand>
        <name>ATP</name>
        <dbReference type="ChEBI" id="CHEBI:30616"/>
    </ligand>
</feature>
<comment type="function">
    <text evidence="1">This protein is involved in the repair of mismatches in DNA. It is possible that it carries out the mismatch recognition step. This protein has a weak ATPase activity.</text>
</comment>
<comment type="similarity">
    <text evidence="1">Belongs to the DNA mismatch repair MutS family.</text>
</comment>
<organism>
    <name type="scientific">Buchnera aphidicola subsp. Acyrthosiphon pisum (strain Tuc7)</name>
    <dbReference type="NCBI Taxonomy" id="561501"/>
    <lineage>
        <taxon>Bacteria</taxon>
        <taxon>Pseudomonadati</taxon>
        <taxon>Pseudomonadota</taxon>
        <taxon>Gammaproteobacteria</taxon>
        <taxon>Enterobacterales</taxon>
        <taxon>Erwiniaceae</taxon>
        <taxon>Buchnera</taxon>
    </lineage>
</organism>
<keyword id="KW-0067">ATP-binding</keyword>
<keyword id="KW-0227">DNA damage</keyword>
<keyword id="KW-0234">DNA repair</keyword>
<keyword id="KW-0238">DNA-binding</keyword>
<keyword id="KW-0547">Nucleotide-binding</keyword>
<proteinExistence type="inferred from homology"/>
<name>MUTS_BUCAT</name>